<feature type="chain" id="PRO_0000317756" description="Probable glutathione peroxidase 8">
    <location>
        <begin position="1"/>
        <end position="209"/>
    </location>
</feature>
<feature type="transmembrane region" description="Helical" evidence="2">
    <location>
        <begin position="18"/>
        <end position="40"/>
    </location>
</feature>
<feature type="active site" evidence="1">
    <location>
        <position position="79"/>
    </location>
</feature>
<feature type="modified residue" description="N-acetylmethionine" evidence="8">
    <location>
        <position position="1"/>
    </location>
</feature>
<feature type="sequence variant" id="VAR_060456" description="In dbSNP:rs381852." evidence="3 4 5 6">
    <original>K</original>
    <variation>R</variation>
    <location>
        <position position="182"/>
    </location>
</feature>
<feature type="helix" evidence="9">
    <location>
        <begin position="47"/>
        <end position="49"/>
    </location>
</feature>
<feature type="strand" evidence="9">
    <location>
        <begin position="51"/>
        <end position="54"/>
    </location>
</feature>
<feature type="strand" evidence="9">
    <location>
        <begin position="59"/>
        <end position="61"/>
    </location>
</feature>
<feature type="helix" evidence="9">
    <location>
        <begin position="62"/>
        <end position="65"/>
    </location>
</feature>
<feature type="strand" evidence="9">
    <location>
        <begin position="68"/>
        <end position="75"/>
    </location>
</feature>
<feature type="strand" evidence="9">
    <location>
        <begin position="77"/>
        <end position="79"/>
    </location>
</feature>
<feature type="helix" evidence="9">
    <location>
        <begin position="82"/>
        <end position="96"/>
    </location>
</feature>
<feature type="turn" evidence="9">
    <location>
        <begin position="97"/>
        <end position="99"/>
    </location>
</feature>
<feature type="strand" evidence="9">
    <location>
        <begin position="100"/>
        <end position="107"/>
    </location>
</feature>
<feature type="helix" evidence="9">
    <location>
        <begin position="119"/>
        <end position="130"/>
    </location>
</feature>
<feature type="helix" evidence="9">
    <location>
        <begin position="149"/>
        <end position="158"/>
    </location>
</feature>
<feature type="strand" evidence="9">
    <location>
        <begin position="168"/>
        <end position="171"/>
    </location>
</feature>
<feature type="strand" evidence="9">
    <location>
        <begin position="177"/>
        <end position="181"/>
    </location>
</feature>
<feature type="helix" evidence="9">
    <location>
        <begin position="187"/>
        <end position="189"/>
    </location>
</feature>
<feature type="helix" evidence="9">
    <location>
        <begin position="191"/>
        <end position="207"/>
    </location>
</feature>
<organism>
    <name type="scientific">Homo sapiens</name>
    <name type="common">Human</name>
    <dbReference type="NCBI Taxonomy" id="9606"/>
    <lineage>
        <taxon>Eukaryota</taxon>
        <taxon>Metazoa</taxon>
        <taxon>Chordata</taxon>
        <taxon>Craniata</taxon>
        <taxon>Vertebrata</taxon>
        <taxon>Euteleostomi</taxon>
        <taxon>Mammalia</taxon>
        <taxon>Eutheria</taxon>
        <taxon>Euarchontoglires</taxon>
        <taxon>Primates</taxon>
        <taxon>Haplorrhini</taxon>
        <taxon>Catarrhini</taxon>
        <taxon>Hominidae</taxon>
        <taxon>Homo</taxon>
    </lineage>
</organism>
<dbReference type="EC" id="1.11.1.9"/>
<dbReference type="EMBL" id="AY358715">
    <property type="protein sequence ID" value="AAQ89077.1"/>
    <property type="molecule type" value="mRNA"/>
</dbReference>
<dbReference type="EMBL" id="AK074216">
    <property type="protein sequence ID" value="BAB85019.1"/>
    <property type="molecule type" value="mRNA"/>
</dbReference>
<dbReference type="EMBL" id="AC091977">
    <property type="status" value="NOT_ANNOTATED_CDS"/>
    <property type="molecule type" value="Genomic_DNA"/>
</dbReference>
<dbReference type="EMBL" id="CH471123">
    <property type="protein sequence ID" value="EAW54908.1"/>
    <property type="molecule type" value="Genomic_DNA"/>
</dbReference>
<dbReference type="EMBL" id="BC029424">
    <property type="protein sequence ID" value="AAH29424.1"/>
    <property type="molecule type" value="mRNA"/>
</dbReference>
<dbReference type="CCDS" id="CCDS34156.1"/>
<dbReference type="RefSeq" id="NP_001008398.2">
    <property type="nucleotide sequence ID" value="NM_001008397.4"/>
</dbReference>
<dbReference type="RefSeq" id="NP_001293126.1">
    <property type="nucleotide sequence ID" value="NM_001306197.1"/>
</dbReference>
<dbReference type="RefSeq" id="NP_001293127.1">
    <property type="nucleotide sequence ID" value="NM_001306198.1"/>
</dbReference>
<dbReference type="RefSeq" id="NP_001293130.1">
    <property type="nucleotide sequence ID" value="NM_001306201.1"/>
</dbReference>
<dbReference type="PDB" id="3CYN">
    <property type="method" value="X-ray"/>
    <property type="resolution" value="2.00 A"/>
    <property type="chains" value="A/B/C=44-209"/>
</dbReference>
<dbReference type="PDB" id="3KIJ">
    <property type="method" value="X-ray"/>
    <property type="resolution" value="1.80 A"/>
    <property type="chains" value="A/B/C=38-209"/>
</dbReference>
<dbReference type="PDBsum" id="3CYN"/>
<dbReference type="PDBsum" id="3KIJ"/>
<dbReference type="SMR" id="Q8TED1"/>
<dbReference type="BioGRID" id="138926">
    <property type="interactions" value="331"/>
</dbReference>
<dbReference type="FunCoup" id="Q8TED1">
    <property type="interactions" value="548"/>
</dbReference>
<dbReference type="IntAct" id="Q8TED1">
    <property type="interactions" value="230"/>
</dbReference>
<dbReference type="MINT" id="Q8TED1"/>
<dbReference type="STRING" id="9606.ENSP00000423822"/>
<dbReference type="DrugBank" id="DB09096">
    <property type="generic name" value="Benzoyl peroxide"/>
</dbReference>
<dbReference type="DrugBank" id="DB00143">
    <property type="generic name" value="Glutathione"/>
</dbReference>
<dbReference type="DrugBank" id="DB03310">
    <property type="generic name" value="Glutathione disulfide"/>
</dbReference>
<dbReference type="GlyGen" id="Q8TED1">
    <property type="glycosylation" value="1 site, 1 O-linked glycan (1 site)"/>
</dbReference>
<dbReference type="iPTMnet" id="Q8TED1"/>
<dbReference type="PhosphoSitePlus" id="Q8TED1"/>
<dbReference type="SwissPalm" id="Q8TED1"/>
<dbReference type="BioMuta" id="GPX8"/>
<dbReference type="DMDM" id="269849565"/>
<dbReference type="jPOST" id="Q8TED1"/>
<dbReference type="MassIVE" id="Q8TED1"/>
<dbReference type="PaxDb" id="9606-ENSP00000423822"/>
<dbReference type="PeptideAtlas" id="Q8TED1"/>
<dbReference type="ProteomicsDB" id="74447"/>
<dbReference type="Pumba" id="Q8TED1"/>
<dbReference type="Antibodypedia" id="23390">
    <property type="antibodies" value="114 antibodies from 23 providers"/>
</dbReference>
<dbReference type="DNASU" id="493869"/>
<dbReference type="Ensembl" id="ENST00000503787.6">
    <property type="protein sequence ID" value="ENSP00000423822.1"/>
    <property type="gene ID" value="ENSG00000164294.14"/>
</dbReference>
<dbReference type="GeneID" id="493869"/>
<dbReference type="KEGG" id="hsa:493869"/>
<dbReference type="MANE-Select" id="ENST00000503787.6">
    <property type="protein sequence ID" value="ENSP00000423822.1"/>
    <property type="RefSeq nucleotide sequence ID" value="NM_001008397.4"/>
    <property type="RefSeq protein sequence ID" value="NP_001008398.2"/>
</dbReference>
<dbReference type="UCSC" id="uc003jpq.3">
    <property type="organism name" value="human"/>
</dbReference>
<dbReference type="AGR" id="HGNC:33100"/>
<dbReference type="CTD" id="493869"/>
<dbReference type="DisGeNET" id="493869"/>
<dbReference type="GeneCards" id="GPX8"/>
<dbReference type="HGNC" id="HGNC:33100">
    <property type="gene designation" value="GPX8"/>
</dbReference>
<dbReference type="HPA" id="ENSG00000164294">
    <property type="expression patterns" value="Low tissue specificity"/>
</dbReference>
<dbReference type="neXtProt" id="NX_Q8TED1"/>
<dbReference type="OpenTargets" id="ENSG00000164294"/>
<dbReference type="PharmGKB" id="PA164720300"/>
<dbReference type="VEuPathDB" id="HostDB:ENSG00000164294"/>
<dbReference type="eggNOG" id="KOG1651">
    <property type="taxonomic scope" value="Eukaryota"/>
</dbReference>
<dbReference type="GeneTree" id="ENSGT00940000159371"/>
<dbReference type="InParanoid" id="Q8TED1"/>
<dbReference type="OMA" id="PTWNFCK"/>
<dbReference type="OrthoDB" id="446890at2759"/>
<dbReference type="PAN-GO" id="Q8TED1">
    <property type="GO annotations" value="1 GO annotation based on evolutionary models"/>
</dbReference>
<dbReference type="PhylomeDB" id="Q8TED1"/>
<dbReference type="TreeFam" id="TF331942"/>
<dbReference type="BRENDA" id="1.11.1.9">
    <property type="organism ID" value="2681"/>
</dbReference>
<dbReference type="PathwayCommons" id="Q8TED1"/>
<dbReference type="Reactome" id="R-HSA-3299685">
    <property type="pathway name" value="Detoxification of Reactive Oxygen Species"/>
</dbReference>
<dbReference type="SignaLink" id="Q8TED1"/>
<dbReference type="BioGRID-ORCS" id="493869">
    <property type="hits" value="29 hits in 1155 CRISPR screens"/>
</dbReference>
<dbReference type="ChiTaRS" id="GPX8">
    <property type="organism name" value="human"/>
</dbReference>
<dbReference type="EvolutionaryTrace" id="Q8TED1"/>
<dbReference type="GeneWiki" id="GPX8"/>
<dbReference type="GenomeRNAi" id="493869"/>
<dbReference type="Pharos" id="Q8TED1">
    <property type="development level" value="Tbio"/>
</dbReference>
<dbReference type="PRO" id="PR:Q8TED1"/>
<dbReference type="Proteomes" id="UP000005640">
    <property type="component" value="Chromosome 5"/>
</dbReference>
<dbReference type="RNAct" id="Q8TED1">
    <property type="molecule type" value="protein"/>
</dbReference>
<dbReference type="Bgee" id="ENSG00000164294">
    <property type="expression patterns" value="Expressed in stromal cell of endometrium and 162 other cell types or tissues"/>
</dbReference>
<dbReference type="ExpressionAtlas" id="Q8TED1">
    <property type="expression patterns" value="baseline and differential"/>
</dbReference>
<dbReference type="GO" id="GO:0005788">
    <property type="term" value="C:endoplasmic reticulum lumen"/>
    <property type="evidence" value="ECO:0000304"/>
    <property type="project" value="Reactome"/>
</dbReference>
<dbReference type="GO" id="GO:0016020">
    <property type="term" value="C:membrane"/>
    <property type="evidence" value="ECO:0007669"/>
    <property type="project" value="UniProtKB-SubCell"/>
</dbReference>
<dbReference type="GO" id="GO:0004602">
    <property type="term" value="F:glutathione peroxidase activity"/>
    <property type="evidence" value="ECO:0007669"/>
    <property type="project" value="UniProtKB-EC"/>
</dbReference>
<dbReference type="GO" id="GO:0004601">
    <property type="term" value="F:peroxidase activity"/>
    <property type="evidence" value="ECO:0000269"/>
    <property type="project" value="Reactome"/>
</dbReference>
<dbReference type="GO" id="GO:0034599">
    <property type="term" value="P:cellular response to oxidative stress"/>
    <property type="evidence" value="ECO:0000304"/>
    <property type="project" value="Reactome"/>
</dbReference>
<dbReference type="CDD" id="cd00340">
    <property type="entry name" value="GSH_Peroxidase"/>
    <property type="match status" value="1"/>
</dbReference>
<dbReference type="FunFam" id="3.40.30.10:FF:000049">
    <property type="entry name" value="Glutathione peroxidase"/>
    <property type="match status" value="1"/>
</dbReference>
<dbReference type="Gene3D" id="3.40.30.10">
    <property type="entry name" value="Glutaredoxin"/>
    <property type="match status" value="1"/>
</dbReference>
<dbReference type="InterPro" id="IPR013376">
    <property type="entry name" value="Glut_perox_Gpx7"/>
</dbReference>
<dbReference type="InterPro" id="IPR000889">
    <property type="entry name" value="Glutathione_peroxidase"/>
</dbReference>
<dbReference type="InterPro" id="IPR029760">
    <property type="entry name" value="GPX_CS"/>
</dbReference>
<dbReference type="InterPro" id="IPR036249">
    <property type="entry name" value="Thioredoxin-like_sf"/>
</dbReference>
<dbReference type="NCBIfam" id="TIGR02540">
    <property type="entry name" value="gpx7"/>
    <property type="match status" value="1"/>
</dbReference>
<dbReference type="PANTHER" id="PTHR11592">
    <property type="entry name" value="GLUTATHIONE PEROXIDASE"/>
    <property type="match status" value="1"/>
</dbReference>
<dbReference type="PANTHER" id="PTHR11592:SF7">
    <property type="entry name" value="GLUTATHIONE PEROXIDASE 8-RELATED"/>
    <property type="match status" value="1"/>
</dbReference>
<dbReference type="Pfam" id="PF00255">
    <property type="entry name" value="GSHPx"/>
    <property type="match status" value="1"/>
</dbReference>
<dbReference type="PIRSF" id="PIRSF000303">
    <property type="entry name" value="Glutathion_perox"/>
    <property type="match status" value="1"/>
</dbReference>
<dbReference type="PRINTS" id="PR01011">
    <property type="entry name" value="GLUTPROXDASE"/>
</dbReference>
<dbReference type="SUPFAM" id="SSF52833">
    <property type="entry name" value="Thioredoxin-like"/>
    <property type="match status" value="1"/>
</dbReference>
<dbReference type="PROSITE" id="PS00763">
    <property type="entry name" value="GLUTATHIONE_PEROXID_2"/>
    <property type="match status" value="1"/>
</dbReference>
<dbReference type="PROSITE" id="PS51355">
    <property type="entry name" value="GLUTATHIONE_PEROXID_3"/>
    <property type="match status" value="1"/>
</dbReference>
<reference key="1">
    <citation type="journal article" date="2003" name="Genome Res.">
        <title>The secreted protein discovery initiative (SPDI), a large-scale effort to identify novel human secreted and transmembrane proteins: a bioinformatics assessment.</title>
        <authorList>
            <person name="Clark H.F."/>
            <person name="Gurney A.L."/>
            <person name="Abaya E."/>
            <person name="Baker K."/>
            <person name="Baldwin D.T."/>
            <person name="Brush J."/>
            <person name="Chen J."/>
            <person name="Chow B."/>
            <person name="Chui C."/>
            <person name="Crowley C."/>
            <person name="Currell B."/>
            <person name="Deuel B."/>
            <person name="Dowd P."/>
            <person name="Eaton D."/>
            <person name="Foster J.S."/>
            <person name="Grimaldi C."/>
            <person name="Gu Q."/>
            <person name="Hass P.E."/>
            <person name="Heldens S."/>
            <person name="Huang A."/>
            <person name="Kim H.S."/>
            <person name="Klimowski L."/>
            <person name="Jin Y."/>
            <person name="Johnson S."/>
            <person name="Lee J."/>
            <person name="Lewis L."/>
            <person name="Liao D."/>
            <person name="Mark M.R."/>
            <person name="Robbie E."/>
            <person name="Sanchez C."/>
            <person name="Schoenfeld J."/>
            <person name="Seshagiri S."/>
            <person name="Simmons L."/>
            <person name="Singh J."/>
            <person name="Smith V."/>
            <person name="Stinson J."/>
            <person name="Vagts A."/>
            <person name="Vandlen R.L."/>
            <person name="Watanabe C."/>
            <person name="Wieand D."/>
            <person name="Woods K."/>
            <person name="Xie M.-H."/>
            <person name="Yansura D.G."/>
            <person name="Yi S."/>
            <person name="Yu G."/>
            <person name="Yuan J."/>
            <person name="Zhang M."/>
            <person name="Zhang Z."/>
            <person name="Goddard A.D."/>
            <person name="Wood W.I."/>
            <person name="Godowski P.J."/>
            <person name="Gray A.M."/>
        </authorList>
    </citation>
    <scope>NUCLEOTIDE SEQUENCE [LARGE SCALE MRNA]</scope>
    <scope>VARIANT ARG-182</scope>
</reference>
<reference key="2">
    <citation type="journal article" date="2004" name="Nat. Genet.">
        <title>Complete sequencing and characterization of 21,243 full-length human cDNAs.</title>
        <authorList>
            <person name="Ota T."/>
            <person name="Suzuki Y."/>
            <person name="Nishikawa T."/>
            <person name="Otsuki T."/>
            <person name="Sugiyama T."/>
            <person name="Irie R."/>
            <person name="Wakamatsu A."/>
            <person name="Hayashi K."/>
            <person name="Sato H."/>
            <person name="Nagai K."/>
            <person name="Kimura K."/>
            <person name="Makita H."/>
            <person name="Sekine M."/>
            <person name="Obayashi M."/>
            <person name="Nishi T."/>
            <person name="Shibahara T."/>
            <person name="Tanaka T."/>
            <person name="Ishii S."/>
            <person name="Yamamoto J."/>
            <person name="Saito K."/>
            <person name="Kawai Y."/>
            <person name="Isono Y."/>
            <person name="Nakamura Y."/>
            <person name="Nagahari K."/>
            <person name="Murakami K."/>
            <person name="Yasuda T."/>
            <person name="Iwayanagi T."/>
            <person name="Wagatsuma M."/>
            <person name="Shiratori A."/>
            <person name="Sudo H."/>
            <person name="Hosoiri T."/>
            <person name="Kaku Y."/>
            <person name="Kodaira H."/>
            <person name="Kondo H."/>
            <person name="Sugawara M."/>
            <person name="Takahashi M."/>
            <person name="Kanda K."/>
            <person name="Yokoi T."/>
            <person name="Furuya T."/>
            <person name="Kikkawa E."/>
            <person name="Omura Y."/>
            <person name="Abe K."/>
            <person name="Kamihara K."/>
            <person name="Katsuta N."/>
            <person name="Sato K."/>
            <person name="Tanikawa M."/>
            <person name="Yamazaki M."/>
            <person name="Ninomiya K."/>
            <person name="Ishibashi T."/>
            <person name="Yamashita H."/>
            <person name="Murakawa K."/>
            <person name="Fujimori K."/>
            <person name="Tanai H."/>
            <person name="Kimata M."/>
            <person name="Watanabe M."/>
            <person name="Hiraoka S."/>
            <person name="Chiba Y."/>
            <person name="Ishida S."/>
            <person name="Ono Y."/>
            <person name="Takiguchi S."/>
            <person name="Watanabe S."/>
            <person name="Yosida M."/>
            <person name="Hotuta T."/>
            <person name="Kusano J."/>
            <person name="Kanehori K."/>
            <person name="Takahashi-Fujii A."/>
            <person name="Hara H."/>
            <person name="Tanase T.-O."/>
            <person name="Nomura Y."/>
            <person name="Togiya S."/>
            <person name="Komai F."/>
            <person name="Hara R."/>
            <person name="Takeuchi K."/>
            <person name="Arita M."/>
            <person name="Imose N."/>
            <person name="Musashino K."/>
            <person name="Yuuki H."/>
            <person name="Oshima A."/>
            <person name="Sasaki N."/>
            <person name="Aotsuka S."/>
            <person name="Yoshikawa Y."/>
            <person name="Matsunawa H."/>
            <person name="Ichihara T."/>
            <person name="Shiohata N."/>
            <person name="Sano S."/>
            <person name="Moriya S."/>
            <person name="Momiyama H."/>
            <person name="Satoh N."/>
            <person name="Takami S."/>
            <person name="Terashima Y."/>
            <person name="Suzuki O."/>
            <person name="Nakagawa S."/>
            <person name="Senoh A."/>
            <person name="Mizoguchi H."/>
            <person name="Goto Y."/>
            <person name="Shimizu F."/>
            <person name="Wakebe H."/>
            <person name="Hishigaki H."/>
            <person name="Watanabe T."/>
            <person name="Sugiyama A."/>
            <person name="Takemoto M."/>
            <person name="Kawakami B."/>
            <person name="Yamazaki M."/>
            <person name="Watanabe K."/>
            <person name="Kumagai A."/>
            <person name="Itakura S."/>
            <person name="Fukuzumi Y."/>
            <person name="Fujimori Y."/>
            <person name="Komiyama M."/>
            <person name="Tashiro H."/>
            <person name="Tanigami A."/>
            <person name="Fujiwara T."/>
            <person name="Ono T."/>
            <person name="Yamada K."/>
            <person name="Fujii Y."/>
            <person name="Ozaki K."/>
            <person name="Hirao M."/>
            <person name="Ohmori Y."/>
            <person name="Kawabata A."/>
            <person name="Hikiji T."/>
            <person name="Kobatake N."/>
            <person name="Inagaki H."/>
            <person name="Ikema Y."/>
            <person name="Okamoto S."/>
            <person name="Okitani R."/>
            <person name="Kawakami T."/>
            <person name="Noguchi S."/>
            <person name="Itoh T."/>
            <person name="Shigeta K."/>
            <person name="Senba T."/>
            <person name="Matsumura K."/>
            <person name="Nakajima Y."/>
            <person name="Mizuno T."/>
            <person name="Morinaga M."/>
            <person name="Sasaki M."/>
            <person name="Togashi T."/>
            <person name="Oyama M."/>
            <person name="Hata H."/>
            <person name="Watanabe M."/>
            <person name="Komatsu T."/>
            <person name="Mizushima-Sugano J."/>
            <person name="Satoh T."/>
            <person name="Shirai Y."/>
            <person name="Takahashi Y."/>
            <person name="Nakagawa K."/>
            <person name="Okumura K."/>
            <person name="Nagase T."/>
            <person name="Nomura N."/>
            <person name="Kikuchi H."/>
            <person name="Masuho Y."/>
            <person name="Yamashita R."/>
            <person name="Nakai K."/>
            <person name="Yada T."/>
            <person name="Nakamura Y."/>
            <person name="Ohara O."/>
            <person name="Isogai T."/>
            <person name="Sugano S."/>
        </authorList>
    </citation>
    <scope>NUCLEOTIDE SEQUENCE [LARGE SCALE MRNA]</scope>
    <scope>VARIANT ARG-182</scope>
</reference>
<reference key="3">
    <citation type="journal article" date="2004" name="Nature">
        <title>The DNA sequence and comparative analysis of human chromosome 5.</title>
        <authorList>
            <person name="Schmutz J."/>
            <person name="Martin J."/>
            <person name="Terry A."/>
            <person name="Couronne O."/>
            <person name="Grimwood J."/>
            <person name="Lowry S."/>
            <person name="Gordon L.A."/>
            <person name="Scott D."/>
            <person name="Xie G."/>
            <person name="Huang W."/>
            <person name="Hellsten U."/>
            <person name="Tran-Gyamfi M."/>
            <person name="She X."/>
            <person name="Prabhakar S."/>
            <person name="Aerts A."/>
            <person name="Altherr M."/>
            <person name="Bajorek E."/>
            <person name="Black S."/>
            <person name="Branscomb E."/>
            <person name="Caoile C."/>
            <person name="Challacombe J.F."/>
            <person name="Chan Y.M."/>
            <person name="Denys M."/>
            <person name="Detter J.C."/>
            <person name="Escobar J."/>
            <person name="Flowers D."/>
            <person name="Fotopulos D."/>
            <person name="Glavina T."/>
            <person name="Gomez M."/>
            <person name="Gonzales E."/>
            <person name="Goodstein D."/>
            <person name="Grigoriev I."/>
            <person name="Groza M."/>
            <person name="Hammon N."/>
            <person name="Hawkins T."/>
            <person name="Haydu L."/>
            <person name="Israni S."/>
            <person name="Jett J."/>
            <person name="Kadner K."/>
            <person name="Kimball H."/>
            <person name="Kobayashi A."/>
            <person name="Lopez F."/>
            <person name="Lou Y."/>
            <person name="Martinez D."/>
            <person name="Medina C."/>
            <person name="Morgan J."/>
            <person name="Nandkeshwar R."/>
            <person name="Noonan J.P."/>
            <person name="Pitluck S."/>
            <person name="Pollard M."/>
            <person name="Predki P."/>
            <person name="Priest J."/>
            <person name="Ramirez L."/>
            <person name="Retterer J."/>
            <person name="Rodriguez A."/>
            <person name="Rogers S."/>
            <person name="Salamov A."/>
            <person name="Salazar A."/>
            <person name="Thayer N."/>
            <person name="Tice H."/>
            <person name="Tsai M."/>
            <person name="Ustaszewska A."/>
            <person name="Vo N."/>
            <person name="Wheeler J."/>
            <person name="Wu K."/>
            <person name="Yang J."/>
            <person name="Dickson M."/>
            <person name="Cheng J.-F."/>
            <person name="Eichler E.E."/>
            <person name="Olsen A."/>
            <person name="Pennacchio L.A."/>
            <person name="Rokhsar D.S."/>
            <person name="Richardson P."/>
            <person name="Lucas S.M."/>
            <person name="Myers R.M."/>
            <person name="Rubin E.M."/>
        </authorList>
    </citation>
    <scope>NUCLEOTIDE SEQUENCE [LARGE SCALE GENOMIC DNA]</scope>
</reference>
<reference key="4">
    <citation type="submission" date="2005-07" db="EMBL/GenBank/DDBJ databases">
        <authorList>
            <person name="Mural R.J."/>
            <person name="Istrail S."/>
            <person name="Sutton G.G."/>
            <person name="Florea L."/>
            <person name="Halpern A.L."/>
            <person name="Mobarry C.M."/>
            <person name="Lippert R."/>
            <person name="Walenz B."/>
            <person name="Shatkay H."/>
            <person name="Dew I."/>
            <person name="Miller J.R."/>
            <person name="Flanigan M.J."/>
            <person name="Edwards N.J."/>
            <person name="Bolanos R."/>
            <person name="Fasulo D."/>
            <person name="Halldorsson B.V."/>
            <person name="Hannenhalli S."/>
            <person name="Turner R."/>
            <person name="Yooseph S."/>
            <person name="Lu F."/>
            <person name="Nusskern D.R."/>
            <person name="Shue B.C."/>
            <person name="Zheng X.H."/>
            <person name="Zhong F."/>
            <person name="Delcher A.L."/>
            <person name="Huson D.H."/>
            <person name="Kravitz S.A."/>
            <person name="Mouchard L."/>
            <person name="Reinert K."/>
            <person name="Remington K.A."/>
            <person name="Clark A.G."/>
            <person name="Waterman M.S."/>
            <person name="Eichler E.E."/>
            <person name="Adams M.D."/>
            <person name="Hunkapiller M.W."/>
            <person name="Myers E.W."/>
            <person name="Venter J.C."/>
        </authorList>
    </citation>
    <scope>NUCLEOTIDE SEQUENCE [LARGE SCALE GENOMIC DNA]</scope>
    <scope>VARIANT ARG-182</scope>
</reference>
<reference key="5">
    <citation type="journal article" date="2004" name="Genome Res.">
        <title>The status, quality, and expansion of the NIH full-length cDNA project: the Mammalian Gene Collection (MGC).</title>
        <authorList>
            <consortium name="The MGC Project Team"/>
        </authorList>
    </citation>
    <scope>NUCLEOTIDE SEQUENCE [LARGE SCALE MRNA]</scope>
    <scope>VARIANT ARG-182</scope>
    <source>
        <tissue>Brain</tissue>
    </source>
</reference>
<reference key="6">
    <citation type="journal article" date="2011" name="BMC Syst. Biol.">
        <title>Initial characterization of the human central proteome.</title>
        <authorList>
            <person name="Burkard T.R."/>
            <person name="Planyavsky M."/>
            <person name="Kaupe I."/>
            <person name="Breitwieser F.P."/>
            <person name="Buerckstuemmer T."/>
            <person name="Bennett K.L."/>
            <person name="Superti-Furga G."/>
            <person name="Colinge J."/>
        </authorList>
    </citation>
    <scope>IDENTIFICATION BY MASS SPECTROMETRY [LARGE SCALE ANALYSIS]</scope>
</reference>
<reference key="7">
    <citation type="journal article" date="2012" name="Proc. Natl. Acad. Sci. U.S.A.">
        <title>N-terminal acetylome analyses and functional insights of the N-terminal acetyltransferase NatB.</title>
        <authorList>
            <person name="Van Damme P."/>
            <person name="Lasa M."/>
            <person name="Polevoda B."/>
            <person name="Gazquez C."/>
            <person name="Elosegui-Artola A."/>
            <person name="Kim D.S."/>
            <person name="De Juan-Pardo E."/>
            <person name="Demeyer K."/>
            <person name="Hole K."/>
            <person name="Larrea E."/>
            <person name="Timmerman E."/>
            <person name="Prieto J."/>
            <person name="Arnesen T."/>
            <person name="Sherman F."/>
            <person name="Gevaert K."/>
            <person name="Aldabe R."/>
        </authorList>
    </citation>
    <scope>ACETYLATION [LARGE SCALE ANALYSIS] AT MET-1</scope>
    <scope>IDENTIFICATION BY MASS SPECTROMETRY [LARGE SCALE ANALYSIS]</scope>
</reference>
<reference key="8">
    <citation type="submission" date="2009-02" db="PDB data bank">
        <title>The structure of human GPX8.</title>
        <authorList>
            <consortium name="Structural genomics consortium (SGC)"/>
        </authorList>
    </citation>
    <scope>X-RAY CRYSTALLOGRAPHY (2.0 ANGSTROMS) OF 44-209</scope>
</reference>
<name>GPX8_HUMAN</name>
<evidence type="ECO:0000250" key="1"/>
<evidence type="ECO:0000255" key="2"/>
<evidence type="ECO:0000269" key="3">
    <source>
    </source>
</evidence>
<evidence type="ECO:0000269" key="4">
    <source>
    </source>
</evidence>
<evidence type="ECO:0000269" key="5">
    <source>
    </source>
</evidence>
<evidence type="ECO:0000269" key="6">
    <source ref="4"/>
</evidence>
<evidence type="ECO:0000305" key="7"/>
<evidence type="ECO:0007744" key="8">
    <source>
    </source>
</evidence>
<evidence type="ECO:0007829" key="9">
    <source>
        <dbReference type="PDB" id="3KIJ"/>
    </source>
</evidence>
<accession>Q8TED1</accession>
<keyword id="KW-0002">3D-structure</keyword>
<keyword id="KW-0007">Acetylation</keyword>
<keyword id="KW-0472">Membrane</keyword>
<keyword id="KW-0560">Oxidoreductase</keyword>
<keyword id="KW-0575">Peroxidase</keyword>
<keyword id="KW-1267">Proteomics identification</keyword>
<keyword id="KW-1185">Reference proteome</keyword>
<keyword id="KW-0812">Transmembrane</keyword>
<keyword id="KW-1133">Transmembrane helix</keyword>
<proteinExistence type="evidence at protein level"/>
<sequence>MEPLAAYPLKCSGPRAKVFAVLLSIVLCTVTLFLLQLKFLKPKINSFYAFEVKDAKGRTVSLEKYKGKVSLVVNVASDCQLTDRNYLGLKELHKEFGPSHFSVLAFPCNQFGESEPRPSKEVESFARKNYGVTFPIFHKIKILGSEGEPAFRFLVDSSKKEPRWNFWKYLVNPEGQVVKFWKPEEPIEVIRPDIAALVRQVIIKKKEDL</sequence>
<protein>
    <recommendedName>
        <fullName>Probable glutathione peroxidase 8</fullName>
        <shortName>GPx-8</shortName>
        <shortName>GSHPx-8</shortName>
        <ecNumber>1.11.1.9</ecNumber>
    </recommendedName>
</protein>
<comment type="catalytic activity">
    <reaction>
        <text>2 glutathione + H2O2 = glutathione disulfide + 2 H2O</text>
        <dbReference type="Rhea" id="RHEA:16833"/>
        <dbReference type="ChEBI" id="CHEBI:15377"/>
        <dbReference type="ChEBI" id="CHEBI:16240"/>
        <dbReference type="ChEBI" id="CHEBI:57925"/>
        <dbReference type="ChEBI" id="CHEBI:58297"/>
        <dbReference type="EC" id="1.11.1.9"/>
    </reaction>
</comment>
<comment type="interaction">
    <interactant intactId="EBI-11721746">
        <id>Q8TED1</id>
    </interactant>
    <interactant intactId="EBI-11522760">
        <id>Q6RW13-2</id>
        <label>AGTRAP</label>
    </interactant>
    <organismsDiffer>false</organismsDiffer>
    <experiments>3</experiments>
</comment>
<comment type="interaction">
    <interactant intactId="EBI-11721746">
        <id>Q8TED1</id>
    </interactant>
    <interactant intactId="EBI-11957045">
        <id>Q9NVV5-2</id>
        <label>AIG1</label>
    </interactant>
    <organismsDiffer>false</organismsDiffer>
    <experiments>3</experiments>
</comment>
<comment type="interaction">
    <interactant intactId="EBI-11721746">
        <id>Q8TED1</id>
    </interactant>
    <interactant intactId="EBI-3921603">
        <id>Q9BVK2</id>
        <label>ALG8</label>
    </interactant>
    <organismsDiffer>false</organismsDiffer>
    <experiments>3</experiments>
</comment>
<comment type="interaction">
    <interactant intactId="EBI-11721746">
        <id>Q8TED1</id>
    </interactant>
    <interactant intactId="EBI-1220113">
        <id>P02656</id>
        <label>APOC3</label>
    </interactant>
    <organismsDiffer>false</organismsDiffer>
    <experiments>3</experiments>
</comment>
<comment type="interaction">
    <interactant intactId="EBI-11721746">
        <id>Q8TED1</id>
    </interactant>
    <interactant intactId="EBI-715495">
        <id>P05090</id>
        <label>APOD</label>
    </interactant>
    <organismsDiffer>false</organismsDiffer>
    <experiments>3</experiments>
</comment>
<comment type="interaction">
    <interactant intactId="EBI-11721746">
        <id>Q8TED1</id>
    </interactant>
    <interactant intactId="EBI-745213">
        <id>P29972</id>
        <label>AQP1</label>
    </interactant>
    <organismsDiffer>false</organismsDiffer>
    <experiments>3</experiments>
</comment>
<comment type="interaction">
    <interactant intactId="EBI-11721746">
        <id>Q8TED1</id>
    </interactant>
    <interactant intactId="EBI-12701138">
        <id>P41181</id>
        <label>AQP2</label>
    </interactant>
    <organismsDiffer>false</organismsDiffer>
    <experiments>3</experiments>
</comment>
<comment type="interaction">
    <interactant intactId="EBI-11721746">
        <id>Q8TED1</id>
    </interactant>
    <interactant intactId="EBI-2808854">
        <id>Q92482</id>
        <label>AQP3</label>
    </interactant>
    <organismsDiffer>false</organismsDiffer>
    <experiments>3</experiments>
</comment>
<comment type="interaction">
    <interactant intactId="EBI-11721746">
        <id>Q8TED1</id>
    </interactant>
    <interactant intactId="EBI-1172335">
        <id>P07306</id>
        <label>ASGR1</label>
    </interactant>
    <organismsDiffer>false</organismsDiffer>
    <experiments>3</experiments>
</comment>
<comment type="interaction">
    <interactant intactId="EBI-11721746">
        <id>Q8TED1</id>
    </interactant>
    <interactant intactId="EBI-12092171">
        <id>Q12797-6</id>
        <label>ASPH</label>
    </interactant>
    <organismsDiffer>false</organismsDiffer>
    <experiments>3</experiments>
</comment>
<comment type="interaction">
    <interactant intactId="EBI-11721746">
        <id>Q8TED1</id>
    </interactant>
    <interactant intactId="EBI-707714">
        <id>Q92843</id>
        <label>BCL2L2</label>
    </interactant>
    <organismsDiffer>false</organismsDiffer>
    <experiments>3</experiments>
</comment>
<comment type="interaction">
    <interactant intactId="EBI-11721746">
        <id>Q8TED1</id>
    </interactant>
    <interactant intactId="EBI-749204">
        <id>O15155</id>
        <label>BET1</label>
    </interactant>
    <organismsDiffer>false</organismsDiffer>
    <experiments>3</experiments>
</comment>
<comment type="interaction">
    <interactant intactId="EBI-11721746">
        <id>Q8TED1</id>
    </interactant>
    <interactant intactId="EBI-700794">
        <id>Q13323</id>
        <label>BIK</label>
    </interactant>
    <organismsDiffer>false</organismsDiffer>
    <experiments>3</experiments>
</comment>
<comment type="interaction">
    <interactant intactId="EBI-11721746">
        <id>Q8TED1</id>
    </interactant>
    <interactant intactId="EBI-3922513">
        <id>O95393</id>
        <label>BMP10</label>
    </interactant>
    <organismsDiffer>false</organismsDiffer>
    <experiments>3</experiments>
</comment>
<comment type="interaction">
    <interactant intactId="EBI-11721746">
        <id>Q8TED1</id>
    </interactant>
    <interactant intactId="EBI-752094">
        <id>Q12982</id>
        <label>BNIP2</label>
    </interactant>
    <organismsDiffer>false</organismsDiffer>
    <experiments>3</experiments>
</comment>
<comment type="interaction">
    <interactant intactId="EBI-11721746">
        <id>Q8TED1</id>
    </interactant>
    <interactant intactId="EBI-8648738">
        <id>Q8WVV5</id>
        <label>BTN2A2</label>
    </interactant>
    <organismsDiffer>false</organismsDiffer>
    <experiments>3</experiments>
</comment>
<comment type="interaction">
    <interactant intactId="EBI-11721746">
        <id>Q8TED1</id>
    </interactant>
    <interactant intactId="EBI-9686780">
        <id>Q06432</id>
        <label>CACNG1</label>
    </interactant>
    <organismsDiffer>false</organismsDiffer>
    <experiments>3</experiments>
</comment>
<comment type="interaction">
    <interactant intactId="EBI-11721746">
        <id>Q8TED1</id>
    </interactant>
    <interactant intactId="EBI-14259393">
        <id>Q8IX05</id>
        <label>CD302</label>
    </interactant>
    <organismsDiffer>false</organismsDiffer>
    <experiments>3</experiments>
</comment>
<comment type="interaction">
    <interactant intactId="EBI-11721746">
        <id>Q8TED1</id>
    </interactant>
    <interactant intactId="EBI-6657396">
        <id>P19397</id>
        <label>CD53</label>
    </interactant>
    <organismsDiffer>false</organismsDiffer>
    <experiments>3</experiments>
</comment>
<comment type="interaction">
    <interactant intactId="EBI-11721746">
        <id>Q8TED1</id>
    </interactant>
    <interactant intactId="EBI-712921">
        <id>P60033</id>
        <label>CD81</label>
    </interactant>
    <organismsDiffer>false</organismsDiffer>
    <experiments>3</experiments>
</comment>
<comment type="interaction">
    <interactant intactId="EBI-11721746">
        <id>Q8TED1</id>
    </interactant>
    <interactant intactId="EBI-358858">
        <id>O14735</id>
        <label>CDIPT</label>
    </interactant>
    <organismsDiffer>false</organismsDiffer>
    <experiments>3</experiments>
</comment>
<comment type="interaction">
    <interactant intactId="EBI-11721746">
        <id>Q8TED1</id>
    </interactant>
    <interactant intactId="EBI-3913685">
        <id>O95674</id>
        <label>CDS2</label>
    </interactant>
    <organismsDiffer>false</organismsDiffer>
    <experiments>3</experiments>
</comment>
<comment type="interaction">
    <interactant intactId="EBI-11721746">
        <id>Q8TED1</id>
    </interactant>
    <interactant intactId="EBI-11579371">
        <id>Q9BXR6</id>
        <label>CFHR5</label>
    </interactant>
    <organismsDiffer>false</organismsDiffer>
    <experiments>3</experiments>
</comment>
<comment type="interaction">
    <interactant intactId="EBI-11721746">
        <id>Q8TED1</id>
    </interactant>
    <interactant intactId="EBI-748017">
        <id>O43916</id>
        <label>CHST1</label>
    </interactant>
    <organismsDiffer>false</organismsDiffer>
    <experiments>3</experiments>
</comment>
<comment type="interaction">
    <interactant intactId="EBI-11721746">
        <id>Q8TED1</id>
    </interactant>
    <interactant intactId="EBI-12256978">
        <id>Q8N6F1-2</id>
        <label>CLDN19</label>
    </interactant>
    <organismsDiffer>false</organismsDiffer>
    <experiments>3</experiments>
</comment>
<comment type="interaction">
    <interactant intactId="EBI-11721746">
        <id>Q8TED1</id>
    </interactant>
    <interactant intactId="EBI-11996768">
        <id>Q8NC01</id>
        <label>CLEC1A</label>
    </interactant>
    <organismsDiffer>false</organismsDiffer>
    <experiments>3</experiments>
</comment>
<comment type="interaction">
    <interactant intactId="EBI-11721746">
        <id>Q8TED1</id>
    </interactant>
    <interactant intactId="EBI-15839595">
        <id>Q6UVW9</id>
        <label>CLEC2A</label>
    </interactant>
    <organismsDiffer>false</organismsDiffer>
    <experiments>3</experiments>
</comment>
<comment type="interaction">
    <interactant intactId="EBI-11721746">
        <id>Q8TED1</id>
    </interactant>
    <interactant intactId="EBI-11522780">
        <id>Q96DZ9-2</id>
        <label>CMTM5</label>
    </interactant>
    <organismsDiffer>false</organismsDiffer>
    <experiments>3</experiments>
</comment>
<comment type="interaction">
    <interactant intactId="EBI-11721746">
        <id>Q8TED1</id>
    </interactant>
    <interactant intactId="EBI-12172273">
        <id>O95406</id>
        <label>CNIH1</label>
    </interactant>
    <organismsDiffer>false</organismsDiffer>
    <experiments>3</experiments>
</comment>
<comment type="interaction">
    <interactant intactId="EBI-11721746">
        <id>Q8TED1</id>
    </interactant>
    <interactant intactId="EBI-12208021">
        <id>Q8TBE1</id>
        <label>CNIH3</label>
    </interactant>
    <organismsDiffer>false</organismsDiffer>
    <experiments>3</experiments>
</comment>
<comment type="interaction">
    <interactant intactId="EBI-11721746">
        <id>Q8TED1</id>
    </interactant>
    <interactant intactId="EBI-12211159">
        <id>P29400-2</id>
        <label>COL4A5</label>
    </interactant>
    <organismsDiffer>false</organismsDiffer>
    <experiments>3</experiments>
</comment>
<comment type="interaction">
    <interactant intactId="EBI-11721746">
        <id>Q8TED1</id>
    </interactant>
    <interactant intactId="EBI-10241815">
        <id>Q4VAQ0</id>
        <label>COL8A2</label>
    </interactant>
    <organismsDiffer>false</organismsDiffer>
    <experiments>3</experiments>
</comment>
<comment type="interaction">
    <interactant intactId="EBI-11721746">
        <id>Q8TED1</id>
    </interactant>
    <interactant intactId="EBI-17876114">
        <id>Q9Y5Q5</id>
        <label>CORIN</label>
    </interactant>
    <organismsDiffer>false</organismsDiffer>
    <experiments>3</experiments>
</comment>
<comment type="interaction">
    <interactant intactId="EBI-11721746">
        <id>Q8TED1</id>
    </interactant>
    <interactant intactId="EBI-8646596">
        <id>P49447</id>
        <label>CYB561</label>
    </interactant>
    <organismsDiffer>false</organismsDiffer>
    <experiments>3</experiments>
</comment>
<comment type="interaction">
    <interactant intactId="EBI-11721746">
        <id>Q8TED1</id>
    </interactant>
    <interactant intactId="EBI-10269179">
        <id>Q8NBI2</id>
        <label>CYB561A3</label>
    </interactant>
    <organismsDiffer>false</organismsDiffer>
    <experiments>3</experiments>
</comment>
<comment type="interaction">
    <interactant intactId="EBI-11721746">
        <id>Q8TED1</id>
    </interactant>
    <interactant intactId="EBI-717654">
        <id>O14569</id>
        <label>CYB561D2</label>
    </interactant>
    <organismsDiffer>false</organismsDiffer>
    <experiments>3</experiments>
</comment>
<comment type="interaction">
    <interactant intactId="EBI-11721746">
        <id>Q8TED1</id>
    </interactant>
    <interactant intactId="EBI-8639143">
        <id>Q96LL9</id>
        <label>DNAJC30</label>
    </interactant>
    <organismsDiffer>false</organismsDiffer>
    <experiments>3</experiments>
</comment>
<comment type="interaction">
    <interactant intactId="EBI-11721746">
        <id>Q8TED1</id>
    </interactant>
    <interactant intactId="EBI-8645574">
        <id>Q9UPQ8</id>
        <label>DOLK</label>
    </interactant>
    <organismsDiffer>false</organismsDiffer>
    <experiments>3</experiments>
</comment>
<comment type="interaction">
    <interactant intactId="EBI-11721746">
        <id>Q8TED1</id>
    </interactant>
    <interactant intactId="EBI-10215665">
        <id>P56851</id>
        <label>EDDM3B</label>
    </interactant>
    <organismsDiffer>false</organismsDiffer>
    <experiments>3</experiments>
</comment>
<comment type="interaction">
    <interactant intactId="EBI-11721746">
        <id>Q8TED1</id>
    </interactant>
    <interactant intactId="EBI-711490">
        <id>Q9UKR5</id>
        <label>ERG28</label>
    </interactant>
    <organismsDiffer>false</organismsDiffer>
    <experiments>3</experiments>
</comment>
<comment type="interaction">
    <interactant intactId="EBI-11721746">
        <id>Q8TED1</id>
    </interactant>
    <interactant intactId="EBI-11337888">
        <id>Q7L5A8</id>
        <label>FA2H</label>
    </interactant>
    <organismsDiffer>false</organismsDiffer>
    <experiments>3</experiments>
</comment>
<comment type="interaction">
    <interactant intactId="EBI-11721746">
        <id>Q8TED1</id>
    </interactant>
    <interactant intactId="EBI-2876774">
        <id>Q92520</id>
        <label>FAM3C</label>
    </interactant>
    <organismsDiffer>false</organismsDiffer>
    <experiments>3</experiments>
</comment>
<comment type="interaction">
    <interactant intactId="EBI-11721746">
        <id>Q8TED1</id>
    </interactant>
    <interactant intactId="EBI-12142299">
        <id>Q96IV6</id>
        <label>FAXDC2</label>
    </interactant>
    <organismsDiffer>false</organismsDiffer>
    <experiments>3</experiments>
</comment>
<comment type="interaction">
    <interactant intactId="EBI-11721746">
        <id>Q8TED1</id>
    </interactant>
    <interactant intactId="EBI-1057431">
        <id>O14556</id>
        <label>GAPDHS</label>
    </interactant>
    <organismsDiffer>false</organismsDiffer>
    <experiments>2</experiments>
</comment>
<comment type="interaction">
    <interactant intactId="EBI-11721746">
        <id>Q8TED1</id>
    </interactant>
    <interactant intactId="EBI-2515857">
        <id>O43681</id>
        <label>GET3</label>
    </interactant>
    <organismsDiffer>false</organismsDiffer>
    <experiments>3</experiments>
</comment>
<comment type="interaction">
    <interactant intactId="EBI-11721746">
        <id>Q8TED1</id>
    </interactant>
    <interactant intactId="EBI-4401517">
        <id>O14653</id>
        <label>GOSR2</label>
    </interactant>
    <organismsDiffer>false</organismsDiffer>
    <experiments>3</experiments>
</comment>
<comment type="interaction">
    <interactant intactId="EBI-11721746">
        <id>Q8TED1</id>
    </interactant>
    <interactant intactId="EBI-11955647">
        <id>Q8TDV0</id>
        <label>GPR151</label>
    </interactant>
    <organismsDiffer>false</organismsDiffer>
    <experiments>3</experiments>
</comment>
<comment type="interaction">
    <interactant intactId="EBI-11721746">
        <id>Q8TED1</id>
    </interactant>
    <interactant intactId="EBI-2927498">
        <id>O60883</id>
        <label>GPR37L1</label>
    </interactant>
    <organismsDiffer>false</organismsDiffer>
    <experiments>3</experiments>
</comment>
<comment type="interaction">
    <interactant intactId="EBI-11721746">
        <id>Q8TED1</id>
    </interactant>
    <interactant intactId="EBI-2832909">
        <id>Q7Z429</id>
        <label>GRINA</label>
    </interactant>
    <organismsDiffer>false</organismsDiffer>
    <experiments>3</experiments>
</comment>
<comment type="interaction">
    <interactant intactId="EBI-11721746">
        <id>Q8TED1</id>
    </interactant>
    <interactant intactId="EBI-702665">
        <id>P02724</id>
        <label>GYPA</label>
    </interactant>
    <organismsDiffer>false</organismsDiffer>
    <experiments>3</experiments>
</comment>
<comment type="interaction">
    <interactant intactId="EBI-11721746">
        <id>Q8TED1</id>
    </interactant>
    <interactant intactId="EBI-5916693">
        <id>Q9HCP6</id>
        <label>HHATL</label>
    </interactant>
    <organismsDiffer>false</organismsDiffer>
    <experiments>3</experiments>
</comment>
<comment type="interaction">
    <interactant intactId="EBI-11721746">
        <id>Q8TED1</id>
    </interactant>
    <interactant intactId="EBI-712096">
        <id>P30519</id>
        <label>HMOX2</label>
    </interactant>
    <organismsDiffer>false</organismsDiffer>
    <experiments>3</experiments>
</comment>
<comment type="interaction">
    <interactant intactId="EBI-11721746">
        <id>Q8TED1</id>
    </interactant>
    <interactant intactId="EBI-720480">
        <id>P24593</id>
        <label>IGFBP5</label>
    </interactant>
    <organismsDiffer>false</organismsDiffer>
    <experiments>3</experiments>
</comment>
<comment type="interaction">
    <interactant intactId="EBI-11721746">
        <id>Q8TED1</id>
    </interactant>
    <interactant intactId="EBI-8503746">
        <id>Q9Y5U4</id>
        <label>INSIG2</label>
    </interactant>
    <organismsDiffer>false</organismsDiffer>
    <experiments>3</experiments>
</comment>
<comment type="interaction">
    <interactant intactId="EBI-11721746">
        <id>Q8TED1</id>
    </interactant>
    <interactant intactId="EBI-8632435">
        <id>P43628</id>
        <label>KIR2DL3</label>
    </interactant>
    <organismsDiffer>false</organismsDiffer>
    <experiments>3</experiments>
</comment>
<comment type="interaction">
    <interactant intactId="EBI-11721746">
        <id>Q8TED1</id>
    </interactant>
    <interactant intactId="EBI-750770">
        <id>Q96E93</id>
        <label>KLRG1</label>
    </interactant>
    <organismsDiffer>false</organismsDiffer>
    <experiments>3</experiments>
</comment>
<comment type="interaction">
    <interactant intactId="EBI-11721746">
        <id>Q8TED1</id>
    </interactant>
    <interactant intactId="EBI-3267258">
        <id>Q86VI4</id>
        <label>LAPTM4B</label>
    </interactant>
    <organismsDiffer>false</organismsDiffer>
    <experiments>3</experiments>
</comment>
<comment type="interaction">
    <interactant intactId="EBI-11721746">
        <id>Q8TED1</id>
    </interactant>
    <interactant intactId="EBI-750776">
        <id>O95214</id>
        <label>LEPROTL1</label>
    </interactant>
    <organismsDiffer>false</organismsDiffer>
    <experiments>3</experiments>
</comment>
<comment type="interaction">
    <interactant intactId="EBI-11721746">
        <id>Q8TED1</id>
    </interactant>
    <interactant intactId="EBI-2820517">
        <id>Q8TAF8</id>
        <label>LHFPL5</label>
    </interactant>
    <organismsDiffer>false</organismsDiffer>
    <experiments>3</experiments>
</comment>
<comment type="interaction">
    <interactant intactId="EBI-11721746">
        <id>Q8TED1</id>
    </interactant>
    <interactant intactId="EBI-12133176">
        <id>Q9UIQ6-2</id>
        <label>LNPEP</label>
    </interactant>
    <organismsDiffer>false</organismsDiffer>
    <experiments>3</experiments>
</comment>
<comment type="interaction">
    <interactant intactId="EBI-11721746">
        <id>Q8TED1</id>
    </interactant>
    <interactant intactId="EBI-12033434">
        <id>Q9UBY5</id>
        <label>LPAR3</label>
    </interactant>
    <organismsDiffer>false</organismsDiffer>
    <experiments>3</experiments>
</comment>
<comment type="interaction">
    <interactant intactId="EBI-11721746">
        <id>Q8TED1</id>
    </interactant>
    <interactant intactId="EBI-12243024">
        <id>Q9Y2E5</id>
        <label>MAN2B2</label>
    </interactant>
    <organismsDiffer>false</organismsDiffer>
    <experiments>3</experiments>
</comment>
<comment type="interaction">
    <interactant intactId="EBI-11721746">
        <id>Q8TED1</id>
    </interactant>
    <interactant intactId="EBI-10317612">
        <id>Q9P0N8</id>
        <label>MARCHF2</label>
    </interactant>
    <organismsDiffer>false</organismsDiffer>
    <experiments>3</experiments>
</comment>
<comment type="interaction">
    <interactant intactId="EBI-11721746">
        <id>Q8TED1</id>
    </interactant>
    <interactant intactId="EBI-2341610">
        <id>Q9NX47</id>
        <label>MARCHF5</label>
    </interactant>
    <organismsDiffer>false</organismsDiffer>
    <experiments>3</experiments>
</comment>
<comment type="interaction">
    <interactant intactId="EBI-11721746">
        <id>Q8TED1</id>
    </interactant>
    <interactant intactId="EBI-3920969">
        <id>Q6N075</id>
        <label>MFSD5</label>
    </interactant>
    <organismsDiffer>false</organismsDiffer>
    <experiments>3</experiments>
</comment>
<comment type="interaction">
    <interactant intactId="EBI-11721746">
        <id>Q8TED1</id>
    </interactant>
    <interactant intactId="EBI-2858252">
        <id>Q6ZSS7</id>
        <label>MFSD6</label>
    </interactant>
    <organismsDiffer>false</organismsDiffer>
    <experiments>3</experiments>
</comment>
<comment type="interaction">
    <interactant intactId="EBI-11721746">
        <id>Q8TED1</id>
    </interactant>
    <interactant intactId="EBI-11324706">
        <id>Q99735</id>
        <label>MGST2</label>
    </interactant>
    <organismsDiffer>false</organismsDiffer>
    <experiments>3</experiments>
</comment>
<comment type="interaction">
    <interactant intactId="EBI-11721746">
        <id>Q8TED1</id>
    </interactant>
    <interactant intactId="EBI-724754">
        <id>O14880</id>
        <label>MGST3</label>
    </interactant>
    <organismsDiffer>false</organismsDiffer>
    <experiments>3</experiments>
</comment>
<comment type="interaction">
    <interactant intactId="EBI-11721746">
        <id>Q8TED1</id>
    </interactant>
    <interactant intactId="EBI-8449636">
        <id>P30301</id>
        <label>MIP</label>
    </interactant>
    <organismsDiffer>false</organismsDiffer>
    <experiments>3</experiments>
</comment>
<comment type="interaction">
    <interactant intactId="EBI-11721746">
        <id>Q8TED1</id>
    </interactant>
    <interactant intactId="EBI-17873222">
        <id>Q15546</id>
        <label>MMD</label>
    </interactant>
    <organismsDiffer>false</organismsDiffer>
    <experiments>3</experiments>
</comment>
<comment type="interaction">
    <interactant intactId="EBI-11721746">
        <id>Q8TED1</id>
    </interactant>
    <interactant intactId="EBI-17641390">
        <id>A6NDP7</id>
        <label>MYADML2</label>
    </interactant>
    <organismsDiffer>false</organismsDiffer>
    <experiments>3</experiments>
</comment>
<comment type="interaction">
    <interactant intactId="EBI-11721746">
        <id>Q8TED1</id>
    </interactant>
    <interactant intactId="EBI-721517">
        <id>Q99519</id>
        <label>NEU1</label>
    </interactant>
    <organismsDiffer>false</organismsDiffer>
    <experiments>3</experiments>
</comment>
<comment type="interaction">
    <interactant intactId="EBI-11721746">
        <id>Q8TED1</id>
    </interactant>
    <interactant intactId="EBI-2802124">
        <id>Q92982</id>
        <label>NINJ1</label>
    </interactant>
    <organismsDiffer>false</organismsDiffer>
    <experiments>3</experiments>
</comment>
<comment type="interaction">
    <interactant intactId="EBI-11721746">
        <id>Q8TED1</id>
    </interactant>
    <interactant intactId="EBI-10252783">
        <id>Q6P499</id>
        <label>NIPAL3</label>
    </interactant>
    <organismsDiffer>false</organismsDiffer>
    <experiments>3</experiments>
</comment>
<comment type="interaction">
    <interactant intactId="EBI-11721746">
        <id>Q8TED1</id>
    </interactant>
    <interactant intactId="EBI-3919611">
        <id>Q16617</id>
        <label>NKG7</label>
    </interactant>
    <organismsDiffer>false</organismsDiffer>
    <experiments>3</experiments>
</comment>
<comment type="interaction">
    <interactant intactId="EBI-11721746">
        <id>Q8TED1</id>
    </interactant>
    <interactant intactId="EBI-12051377">
        <id>Q8N912</id>
        <label>NRAC</label>
    </interactant>
    <organismsDiffer>false</organismsDiffer>
    <experiments>3</experiments>
</comment>
<comment type="interaction">
    <interactant intactId="EBI-11721746">
        <id>Q8TED1</id>
    </interactant>
    <interactant intactId="EBI-10262547">
        <id>Q8IXM6</id>
        <label>NRM</label>
    </interactant>
    <organismsDiffer>false</organismsDiffer>
    <experiments>3</experiments>
</comment>
<comment type="interaction">
    <interactant intactId="EBI-11721746">
        <id>Q8TED1</id>
    </interactant>
    <interactant intactId="EBI-2903088">
        <id>Q16625</id>
        <label>OCLN</label>
    </interactant>
    <organismsDiffer>false</organismsDiffer>
    <experiments>3</experiments>
</comment>
<comment type="interaction">
    <interactant intactId="EBI-11721746">
        <id>Q8TED1</id>
    </interactant>
    <interactant intactId="EBI-465167">
        <id>P09466</id>
        <label>PAEP</label>
    </interactant>
    <organismsDiffer>false</organismsDiffer>
    <experiments>3</experiments>
</comment>
<comment type="interaction">
    <interactant intactId="EBI-11721746">
        <id>Q8TED1</id>
    </interactant>
    <interactant intactId="EBI-10316423">
        <id>Q9NXK6</id>
        <label>PAQR5</label>
    </interactant>
    <organismsDiffer>false</organismsDiffer>
    <experiments>3</experiments>
</comment>
<comment type="interaction">
    <interactant intactId="EBI-11721746">
        <id>Q8TED1</id>
    </interactant>
    <interactant intactId="EBI-17265310">
        <id>Q6TCH4</id>
        <label>PAQR6</label>
    </interactant>
    <organismsDiffer>false</organismsDiffer>
    <experiments>3</experiments>
</comment>
<comment type="interaction">
    <interactant intactId="EBI-11721746">
        <id>Q8TED1</id>
    </interactant>
    <interactant intactId="EBI-12092917">
        <id>Q9UHJ9-5</id>
        <label>PGAP2</label>
    </interactant>
    <organismsDiffer>false</organismsDiffer>
    <experiments>3</experiments>
</comment>
<comment type="interaction">
    <interactant intactId="EBI-11721746">
        <id>Q8TED1</id>
    </interactant>
    <interactant intactId="EBI-3919291">
        <id>Q9Y342</id>
        <label>PLLP</label>
    </interactant>
    <organismsDiffer>false</organismsDiffer>
    <experiments>3</experiments>
</comment>
<comment type="interaction">
    <interactant intactId="EBI-11721746">
        <id>Q8TED1</id>
    </interactant>
    <interactant intactId="EBI-692836">
        <id>P26678</id>
        <label>PLN</label>
    </interactant>
    <organismsDiffer>false</organismsDiffer>
    <experiments>3</experiments>
</comment>
<comment type="interaction">
    <interactant intactId="EBI-11721746">
        <id>Q8TED1</id>
    </interactant>
    <interactant intactId="EBI-608347">
        <id>Q04941</id>
        <label>PLP2</label>
    </interactant>
    <organismsDiffer>false</organismsDiffer>
    <experiments>3</experiments>
</comment>
<comment type="interaction">
    <interactant intactId="EBI-11721746">
        <id>Q8TED1</id>
    </interactant>
    <interactant intactId="EBI-10485931">
        <id>Q5VZY2</id>
        <label>PLPP4</label>
    </interactant>
    <organismsDiffer>false</organismsDiffer>
    <experiments>3</experiments>
</comment>
<comment type="interaction">
    <interactant intactId="EBI-11721746">
        <id>Q8TED1</id>
    </interactant>
    <interactant intactId="EBI-11721828">
        <id>Q8IY26</id>
        <label>PLPP6</label>
    </interactant>
    <organismsDiffer>false</organismsDiffer>
    <experiments>3</experiments>
</comment>
<comment type="interaction">
    <interactant intactId="EBI-11721746">
        <id>Q8TED1</id>
    </interactant>
    <interactant intactId="EBI-8652812">
        <id>P54315</id>
        <label>PNLIPRP1</label>
    </interactant>
    <organismsDiffer>false</organismsDiffer>
    <experiments>3</experiments>
</comment>
<comment type="interaction">
    <interactant intactId="EBI-11721746">
        <id>Q8TED1</id>
    </interactant>
    <interactant intactId="EBI-10173935">
        <id>A5D903</id>
        <label>PRB1</label>
    </interactant>
    <organismsDiffer>false</organismsDiffer>
    <experiments>3</experiments>
</comment>
<comment type="interaction">
    <interactant intactId="EBI-11721746">
        <id>Q8TED1</id>
    </interactant>
    <interactant intactId="EBI-3232108">
        <id>Q8N0V3</id>
        <label>RBFA</label>
    </interactant>
    <organismsDiffer>false</organismsDiffer>
    <experiments>3</experiments>
</comment>
<comment type="interaction">
    <interactant intactId="EBI-11721746">
        <id>Q8TED1</id>
    </interactant>
    <interactant intactId="EBI-448618">
        <id>Q92730</id>
        <label>RND1</label>
    </interactant>
    <organismsDiffer>false</organismsDiffer>
    <experiments>3</experiments>
</comment>
<comment type="interaction">
    <interactant intactId="EBI-11721746">
        <id>Q8TED1</id>
    </interactant>
    <interactant intactId="EBI-10244780">
        <id>Q5QGT7</id>
        <label>RTP2</label>
    </interactant>
    <organismsDiffer>false</organismsDiffer>
    <experiments>3</experiments>
</comment>
<comment type="interaction">
    <interactant intactId="EBI-11721746">
        <id>Q8TED1</id>
    </interactant>
    <interactant intactId="EBI-1564650">
        <id>Q14108</id>
        <label>SCARB2</label>
    </interactant>
    <organismsDiffer>false</organismsDiffer>
    <experiments>3</experiments>
</comment>
<comment type="interaction">
    <interactant intactId="EBI-11721746">
        <id>Q8TED1</id>
    </interactant>
    <interactant intactId="EBI-12056025">
        <id>Q14162</id>
        <label>SCARF1</label>
    </interactant>
    <organismsDiffer>false</organismsDiffer>
    <experiments>3</experiments>
</comment>
<comment type="interaction">
    <interactant intactId="EBI-11721746">
        <id>Q8TED1</id>
    </interactant>
    <interactant intactId="EBI-2684237">
        <id>O00767</id>
        <label>SCD</label>
    </interactant>
    <organismsDiffer>false</organismsDiffer>
    <experiments>3</experiments>
</comment>
<comment type="interaction">
    <interactant intactId="EBI-11721746">
        <id>Q8TED1</id>
    </interactant>
    <interactant intactId="EBI-1058865">
        <id>O75396</id>
        <label>SEC22B</label>
    </interactant>
    <organismsDiffer>false</organismsDiffer>
    <experiments>3</experiments>
</comment>
<comment type="interaction">
    <interactant intactId="EBI-11721746">
        <id>Q8TED1</id>
    </interactant>
    <interactant intactId="EBI-9679163">
        <id>Q9Y6D0</id>
        <label>SELENOK</label>
    </interactant>
    <organismsDiffer>false</organismsDiffer>
    <experiments>3</experiments>
</comment>
<comment type="interaction">
    <interactant intactId="EBI-11721746">
        <id>Q8TED1</id>
    </interactant>
    <interactant intactId="EBI-2683145">
        <id>Q9NRX5</id>
        <label>SERINC1</label>
    </interactant>
    <organismsDiffer>false</organismsDiffer>
    <experiments>3</experiments>
</comment>
<comment type="interaction">
    <interactant intactId="EBI-11721746">
        <id>Q8TED1</id>
    </interactant>
    <interactant intactId="EBI-10329948">
        <id>Q9Y6X1</id>
        <label>SERP1</label>
    </interactant>
    <organismsDiffer>false</organismsDiffer>
    <experiments>3</experiments>
</comment>
<comment type="interaction">
    <interactant intactId="EBI-11721746">
        <id>Q8TED1</id>
    </interactant>
    <interactant intactId="EBI-17284533">
        <id>A2A2V5</id>
        <label>SERTM1</label>
    </interactant>
    <organismsDiffer>false</organismsDiffer>
    <experiments>3</experiments>
</comment>
<comment type="interaction">
    <interactant intactId="EBI-11721746">
        <id>Q8TED1</id>
    </interactant>
    <interactant intactId="EBI-10197617">
        <id>P11686</id>
        <label>SFTPC</label>
    </interactant>
    <organismsDiffer>false</organismsDiffer>
    <experiments>4</experiments>
</comment>
<comment type="interaction">
    <interactant intactId="EBI-11721746">
        <id>Q8TED1</id>
    </interactant>
    <interactant intactId="EBI-10977284">
        <id>Q8NHU3</id>
        <label>SGMS2</label>
    </interactant>
    <organismsDiffer>false</organismsDiffer>
    <experiments>3</experiments>
</comment>
<comment type="interaction">
    <interactant intactId="EBI-11721746">
        <id>Q8TED1</id>
    </interactant>
    <interactant intactId="EBI-12938720">
        <id>Q8WWT9</id>
        <label>SLC13A3</label>
    </interactant>
    <organismsDiffer>false</organismsDiffer>
    <experiments>3</experiments>
</comment>
<comment type="interaction">
    <interactant intactId="EBI-11721746">
        <id>Q8TED1</id>
    </interactant>
    <interactant intactId="EBI-10294651">
        <id>Q99726</id>
        <label>SLC30A3</label>
    </interactant>
    <organismsDiffer>false</organismsDiffer>
    <experiments>3</experiments>
</comment>
<comment type="interaction">
    <interactant intactId="EBI-11721746">
        <id>Q8TED1</id>
    </interactant>
    <interactant intactId="EBI-17769653">
        <id>Q8N130</id>
        <label>SLC34A3</label>
    </interactant>
    <organismsDiffer>false</organismsDiffer>
    <experiments>3</experiments>
</comment>
<comment type="interaction">
    <interactant intactId="EBI-11721746">
        <id>Q8TED1</id>
    </interactant>
    <interactant intactId="EBI-12870360">
        <id>P78382</id>
        <label>SLC35A1</label>
    </interactant>
    <organismsDiffer>false</organismsDiffer>
    <experiments>3</experiments>
</comment>
<comment type="interaction">
    <interactant intactId="EBI-11721746">
        <id>Q8TED1</id>
    </interactant>
    <interactant intactId="EBI-10281213">
        <id>Q969S0</id>
        <label>SLC35B4</label>
    </interactant>
    <organismsDiffer>false</organismsDiffer>
    <experiments>3</experiments>
</comment>
<comment type="interaction">
    <interactant intactId="EBI-11721746">
        <id>Q8TED1</id>
    </interactant>
    <interactant intactId="EBI-10290130">
        <id>Q96JW4</id>
        <label>SLC41A2</label>
    </interactant>
    <organismsDiffer>false</organismsDiffer>
    <experiments>3</experiments>
</comment>
<comment type="interaction">
    <interactant intactId="EBI-11721746">
        <id>Q8TED1</id>
    </interactant>
    <interactant intactId="EBI-10226799">
        <id>Q0VAQ4</id>
        <label>SMAGP</label>
    </interactant>
    <organismsDiffer>false</organismsDiffer>
    <experiments>3</experiments>
</comment>
<comment type="interaction">
    <interactant intactId="EBI-11721746">
        <id>Q8TED1</id>
    </interactant>
    <interactant intactId="EBI-11957067">
        <id>Q6UX34</id>
        <label>SNORC</label>
    </interactant>
    <organismsDiffer>false</organismsDiffer>
    <experiments>3</experiments>
</comment>
<comment type="interaction">
    <interactant intactId="EBI-11721746">
        <id>Q8TED1</id>
    </interactant>
    <interactant intactId="EBI-12908338">
        <id>Q96JF0-2</id>
        <label>ST6GAL2</label>
    </interactant>
    <organismsDiffer>false</organismsDiffer>
    <experiments>3</experiments>
</comment>
<comment type="interaction">
    <interactant intactId="EBI-11721746">
        <id>Q8TED1</id>
    </interactant>
    <interactant intactId="EBI-1394295">
        <id>Q13277</id>
        <label>STX3</label>
    </interactant>
    <organismsDiffer>false</organismsDiffer>
    <experiments>3</experiments>
</comment>
<comment type="interaction">
    <interactant intactId="EBI-11721746">
        <id>Q8TED1</id>
    </interactant>
    <interactant intactId="EBI-727240">
        <id>Q9UNK0</id>
        <label>STX8</label>
    </interactant>
    <organismsDiffer>false</organismsDiffer>
    <experiments>3</experiments>
</comment>
<comment type="interaction">
    <interactant intactId="EBI-11721746">
        <id>Q8TED1</id>
    </interactant>
    <interactant intactId="EBI-13373352">
        <id>Q9BQS2-2</id>
        <label>SYT15</label>
    </interactant>
    <organismsDiffer>false</organismsDiffer>
    <experiments>3</experiments>
</comment>
<comment type="interaction">
    <interactant intactId="EBI-11721746">
        <id>Q8TED1</id>
    </interactant>
    <interactant intactId="EBI-714319">
        <id>P02787</id>
        <label>TF</label>
    </interactant>
    <organismsDiffer>false</organismsDiffer>
    <experiments>3</experiments>
</comment>
<comment type="interaction">
    <interactant intactId="EBI-11721746">
        <id>Q8TED1</id>
    </interactant>
    <interactant intactId="EBI-941422">
        <id>P07204</id>
        <label>THBD</label>
    </interactant>
    <organismsDiffer>false</organismsDiffer>
    <experiments>3</experiments>
</comment>
<comment type="interaction">
    <interactant intactId="EBI-11721746">
        <id>Q8TED1</id>
    </interactant>
    <interactant intactId="EBI-6268651">
        <id>Q9NPL8</id>
        <label>TIMMDC1</label>
    </interactant>
    <organismsDiffer>false</organismsDiffer>
    <experiments>3</experiments>
</comment>
<comment type="interaction">
    <interactant intactId="EBI-11721746">
        <id>Q8TED1</id>
    </interactant>
    <interactant intactId="EBI-8650934">
        <id>P48230</id>
        <label>TM4SF4</label>
    </interactant>
    <organismsDiffer>false</organismsDiffer>
    <experiments>3</experiments>
</comment>
<comment type="interaction">
    <interactant intactId="EBI-11721746">
        <id>Q8TED1</id>
    </interactant>
    <interactant intactId="EBI-1045825">
        <id>P55061</id>
        <label>TMBIM6</label>
    </interactant>
    <organismsDiffer>false</organismsDiffer>
    <experiments>3</experiments>
</comment>
<comment type="interaction">
    <interactant intactId="EBI-11721746">
        <id>Q8TED1</id>
    </interactant>
    <interactant intactId="EBI-12845616">
        <id>Q6UX40</id>
        <label>TMEM107</label>
    </interactant>
    <organismsDiffer>false</organismsDiffer>
    <experiments>3</experiments>
</comment>
<comment type="interaction">
    <interactant intactId="EBI-11721746">
        <id>Q8TED1</id>
    </interactant>
    <interactant intactId="EBI-1057733">
        <id>Q9BVC6</id>
        <label>TMEM109</label>
    </interactant>
    <organismsDiffer>false</organismsDiffer>
    <experiments>3</experiments>
</comment>
<comment type="interaction">
    <interactant intactId="EBI-11721746">
        <id>Q8TED1</id>
    </interactant>
    <interactant intactId="EBI-10171534">
        <id>A0PK00</id>
        <label>TMEM120B</label>
    </interactant>
    <organismsDiffer>false</organismsDiffer>
    <experiments>3</experiments>
</comment>
<comment type="interaction">
    <interactant intactId="EBI-11721746">
        <id>Q8TED1</id>
    </interactant>
    <interactant intactId="EBI-10694905">
        <id>Q5BJH2-2</id>
        <label>TMEM128</label>
    </interactant>
    <organismsDiffer>false</organismsDiffer>
    <experiments>3</experiments>
</comment>
<comment type="interaction">
    <interactant intactId="EBI-11721746">
        <id>Q8TED1</id>
    </interactant>
    <interactant intactId="EBI-8638294">
        <id>Q9NUH8</id>
        <label>TMEM14B</label>
    </interactant>
    <organismsDiffer>false</organismsDiffer>
    <experiments>3</experiments>
</comment>
<comment type="interaction">
    <interactant intactId="EBI-11721746">
        <id>Q8TED1</id>
    </interactant>
    <interactant intactId="EBI-741829">
        <id>Q96HH6</id>
        <label>TMEM19</label>
    </interactant>
    <organismsDiffer>false</organismsDiffer>
    <experiments>3</experiments>
</comment>
<comment type="interaction">
    <interactant intactId="EBI-11721746">
        <id>Q8TED1</id>
    </interactant>
    <interactant intactId="EBI-10173151">
        <id>A2RU14</id>
        <label>TMEM218</label>
    </interactant>
    <organismsDiffer>false</organismsDiffer>
    <experiments>3</experiments>
</comment>
<comment type="interaction">
    <interactant intactId="EBI-11721746">
        <id>Q8TED1</id>
    </interactant>
    <interactant intactId="EBI-12195227">
        <id>Q8NBD8</id>
        <label>TMEM229B</label>
    </interactant>
    <organismsDiffer>false</organismsDiffer>
    <experiments>3</experiments>
</comment>
<comment type="interaction">
    <interactant intactId="EBI-11721746">
        <id>Q8TED1</id>
    </interactant>
    <interactant intactId="EBI-12887458">
        <id>Q9BU79</id>
        <label>TMEM243</label>
    </interactant>
    <organismsDiffer>false</organismsDiffer>
    <experiments>3</experiments>
</comment>
<comment type="interaction">
    <interactant intactId="EBI-11721746">
        <id>Q8TED1</id>
    </interactant>
    <interactant intactId="EBI-11956809">
        <id>Q8TBM7</id>
        <label>TMEM254</label>
    </interactant>
    <organismsDiffer>false</organismsDiffer>
    <experiments>3</experiments>
</comment>
<comment type="interaction">
    <interactant intactId="EBI-11721746">
        <id>Q8TED1</id>
    </interactant>
    <interactant intactId="EBI-12038591">
        <id>Q69YG0</id>
        <label>TMEM42</label>
    </interactant>
    <organismsDiffer>false</organismsDiffer>
    <experiments>3</experiments>
</comment>
<comment type="interaction">
    <interactant intactId="EBI-11721746">
        <id>Q8TED1</id>
    </interactant>
    <interactant intactId="EBI-12366453">
        <id>P56557</id>
        <label>TMEM50B</label>
    </interactant>
    <organismsDiffer>false</organismsDiffer>
    <experiments>3</experiments>
</comment>
<comment type="interaction">
    <interactant intactId="EBI-11721746">
        <id>Q8TED1</id>
    </interactant>
    <interactant intactId="EBI-2852148">
        <id>Q9H2L4</id>
        <label>TMEM60</label>
    </interactant>
    <organismsDiffer>false</organismsDiffer>
    <experiments>3</experiments>
</comment>
<comment type="interaction">
    <interactant intactId="EBI-11721746">
        <id>Q8TED1</id>
    </interactant>
    <interactant intactId="EBI-2548832">
        <id>Q8N661</id>
        <label>TMEM86B</label>
    </interactant>
    <organismsDiffer>false</organismsDiffer>
    <experiments>3</experiments>
</comment>
<comment type="interaction">
    <interactant intactId="EBI-11721746">
        <id>Q8TED1</id>
    </interactant>
    <interactant intactId="EBI-12111910">
        <id>Q5BJF2</id>
        <label>TMEM97</label>
    </interactant>
    <organismsDiffer>false</organismsDiffer>
    <experiments>3</experiments>
</comment>
<comment type="interaction">
    <interactant intactId="EBI-11721746">
        <id>Q8TED1</id>
    </interactant>
    <interactant intactId="EBI-10313040">
        <id>Q9NRS4</id>
        <label>TMPRSS4</label>
    </interactant>
    <organismsDiffer>false</organismsDiffer>
    <experiments>3</experiments>
</comment>
<comment type="interaction">
    <interactant intactId="EBI-11721746">
        <id>Q8TED1</id>
    </interactant>
    <interactant intactId="EBI-2820477">
        <id>Q71RG4</id>
        <label>TMUB2</label>
    </interactant>
    <organismsDiffer>false</organismsDiffer>
    <experiments>3</experiments>
</comment>
<comment type="interaction">
    <interactant intactId="EBI-11721746">
        <id>Q8TED1</id>
    </interactant>
    <interactant intactId="EBI-11996766">
        <id>Q8N609</id>
        <label>TRAM1L1</label>
    </interactant>
    <organismsDiffer>false</organismsDiffer>
    <experiments>3</experiments>
</comment>
<comment type="interaction">
    <interactant intactId="EBI-11721746">
        <id>Q8TED1</id>
    </interactant>
    <interactant intactId="EBI-12045841">
        <id>Q86UF1</id>
        <label>TSPAN33</label>
    </interactant>
    <organismsDiffer>false</organismsDiffer>
    <experiments>3</experiments>
</comment>
<comment type="interaction">
    <interactant intactId="EBI-11721746">
        <id>Q8TED1</id>
    </interactant>
    <interactant intactId="EBI-7601760">
        <id>Q53HI1</id>
        <label>UNC50</label>
    </interactant>
    <organismsDiffer>false</organismsDiffer>
    <experiments>3</experiments>
</comment>
<comment type="interaction">
    <interactant intactId="EBI-11721746">
        <id>Q8TED1</id>
    </interactant>
    <interactant intactId="EBI-12237619">
        <id>O75841</id>
        <label>UPK1B</label>
    </interactant>
    <organismsDiffer>false</organismsDiffer>
    <experiments>3</experiments>
</comment>
<comment type="interaction">
    <interactant intactId="EBI-11721746">
        <id>Q8TED1</id>
    </interactant>
    <interactant intactId="EBI-722343">
        <id>Q15836</id>
        <label>VAMP3</label>
    </interactant>
    <organismsDiffer>false</organismsDiffer>
    <experiments>3</experiments>
</comment>
<comment type="interaction">
    <interactant intactId="EBI-11721746">
        <id>Q8TED1</id>
    </interactant>
    <interactant intactId="EBI-744953">
        <id>O75379</id>
        <label>VAMP4</label>
    </interactant>
    <organismsDiffer>false</organismsDiffer>
    <experiments>3</experiments>
</comment>
<comment type="interaction">
    <interactant intactId="EBI-11721746">
        <id>Q8TED1</id>
    </interactant>
    <interactant intactId="EBI-10191195">
        <id>O95183</id>
        <label>VAMP5</label>
    </interactant>
    <organismsDiffer>false</organismsDiffer>
    <experiments>3</experiments>
</comment>
<comment type="interaction">
    <interactant intactId="EBI-11721746">
        <id>Q8TED1</id>
    </interactant>
    <interactant intactId="EBI-11337915">
        <id>Q8N0U8</id>
        <label>VKORC1L1</label>
    </interactant>
    <organismsDiffer>false</organismsDiffer>
    <experiments>3</experiments>
</comment>
<comment type="interaction">
    <interactant intactId="EBI-11721746">
        <id>Q8TED1</id>
    </interactant>
    <interactant intactId="EBI-12190699">
        <id>Q6UX27-3</id>
        <label>VSTM1</label>
    </interactant>
    <organismsDiffer>false</organismsDiffer>
    <experiments>3</experiments>
</comment>
<comment type="interaction">
    <interactant intactId="EBI-11721746">
        <id>Q8TED1</id>
    </interactant>
    <interactant intactId="EBI-723716">
        <id>Q9UEU0</id>
        <label>VTI1B</label>
    </interactant>
    <organismsDiffer>false</organismsDiffer>
    <experiments>3</experiments>
</comment>
<comment type="interaction">
    <interactant intactId="EBI-11721746">
        <id>Q8TED1</id>
    </interactant>
    <interactant intactId="EBI-2799703">
        <id>O95070</id>
        <label>YIF1A</label>
    </interactant>
    <organismsDiffer>false</organismsDiffer>
    <experiments>3</experiments>
</comment>
<comment type="interaction">
    <interactant intactId="EBI-11721746">
        <id>Q8TED1</id>
    </interactant>
    <interactant intactId="EBI-751210">
        <id>Q96EC8</id>
        <label>YIPF6</label>
    </interactant>
    <organismsDiffer>false</organismsDiffer>
    <experiments>3</experiments>
</comment>
<comment type="interaction">
    <interactant intactId="EBI-11721746">
        <id>Q8TED1</id>
    </interactant>
    <interactant intactId="EBI-10268111">
        <id>Q8N966</id>
        <label>ZDHHC22</label>
    </interactant>
    <organismsDiffer>false</organismsDiffer>
    <experiments>3</experiments>
</comment>
<comment type="subcellular location">
    <subcellularLocation>
        <location evidence="7">Membrane</location>
        <topology evidence="7">Single-pass membrane protein</topology>
    </subcellularLocation>
</comment>
<comment type="similarity">
    <text evidence="7">Belongs to the glutathione peroxidase family.</text>
</comment>
<gene>
    <name type="primary">GPX8</name>
    <name type="ORF">UNQ847/PRO1785</name>
</gene>